<reference key="1">
    <citation type="journal article" date="1987" name="FEBS Lett.">
        <title>The precursor of barley plastocyanin: sequence of cDNA clones and gene expression in different tissues.</title>
        <authorList>
            <person name="Nielsen O.S."/>
            <person name="Gausing K."/>
        </authorList>
    </citation>
    <scope>NUCLEOTIDE SEQUENCE</scope>
    <source>
        <strain>cv. Bomi</strain>
    </source>
</reference>
<reference key="2">
    <citation type="journal article" date="1993" name="Eur. J. Biochem.">
        <title>In vitro binding of nuclear proteins to the barley plastocyanin gene promoter region.</title>
        <authorList>
            <person name="Nielsen P."/>
            <person name="Gausing K."/>
        </authorList>
    </citation>
    <scope>NUCLEOTIDE SEQUENCE [GENOMIC DNA / MRNA]</scope>
    <source>
        <strain>cv. NK 1558</strain>
    </source>
</reference>
<proteinExistence type="evidence at transcript level"/>
<sequence length="155" mass="15709">MAALSSAAVSVPSFAAATPMRSSRSSRMVVRASLGKKAASAAVAMAAGAMLLGGSAMAQDVLLGANGGVLVFEPNDFSVKAGETITFKNNAGYPHNVVFDEDAVPSGVDVSKISQEEYLTAPGETFSVTLTVPGTYGFYCEPHAGAGMVGKVTVN</sequence>
<feature type="transit peptide" description="Chloroplast">
    <location>
        <begin position="1"/>
        <end position="58"/>
    </location>
</feature>
<feature type="chain" id="PRO_0000002888" description="Plastocyanin, chloroplastic">
    <location>
        <begin position="59"/>
        <end position="155"/>
    </location>
</feature>
<feature type="domain" description="Plastocyanin-like">
    <location>
        <begin position="59"/>
        <end position="155"/>
    </location>
</feature>
<feature type="binding site" evidence="1">
    <location>
        <position position="95"/>
    </location>
    <ligand>
        <name>Cu cation</name>
        <dbReference type="ChEBI" id="CHEBI:23378"/>
    </ligand>
</feature>
<feature type="binding site" evidence="1">
    <location>
        <position position="140"/>
    </location>
    <ligand>
        <name>Cu cation</name>
        <dbReference type="ChEBI" id="CHEBI:23378"/>
    </ligand>
</feature>
<feature type="binding site" evidence="1">
    <location>
        <position position="143"/>
    </location>
    <ligand>
        <name>Cu cation</name>
        <dbReference type="ChEBI" id="CHEBI:23378"/>
    </ligand>
</feature>
<feature type="binding site" evidence="1">
    <location>
        <position position="148"/>
    </location>
    <ligand>
        <name>Cu cation</name>
        <dbReference type="ChEBI" id="CHEBI:23378"/>
    </ligand>
</feature>
<feature type="sequence variant" description="In strain: cv. NK 1558.">
    <original>T</original>
    <variation>N</variation>
    <location>
        <position position="120"/>
    </location>
</feature>
<evidence type="ECO:0000250" key="1">
    <source>
        <dbReference type="UniProtKB" id="P18068"/>
    </source>
</evidence>
<evidence type="ECO:0000305" key="2"/>
<accession>P08248</accession>
<protein>
    <recommendedName>
        <fullName>Plastocyanin, chloroplastic</fullName>
    </recommendedName>
</protein>
<name>PLAS_HORVU</name>
<keyword id="KW-0150">Chloroplast</keyword>
<keyword id="KW-0186">Copper</keyword>
<keyword id="KW-0249">Electron transport</keyword>
<keyword id="KW-0472">Membrane</keyword>
<keyword id="KW-0479">Metal-binding</keyword>
<keyword id="KW-0934">Plastid</keyword>
<keyword id="KW-0793">Thylakoid</keyword>
<keyword id="KW-0809">Transit peptide</keyword>
<keyword id="KW-0813">Transport</keyword>
<organism>
    <name type="scientific">Hordeum vulgare</name>
    <name type="common">Barley</name>
    <dbReference type="NCBI Taxonomy" id="4513"/>
    <lineage>
        <taxon>Eukaryota</taxon>
        <taxon>Viridiplantae</taxon>
        <taxon>Streptophyta</taxon>
        <taxon>Embryophyta</taxon>
        <taxon>Tracheophyta</taxon>
        <taxon>Spermatophyta</taxon>
        <taxon>Magnoliopsida</taxon>
        <taxon>Liliopsida</taxon>
        <taxon>Poales</taxon>
        <taxon>Poaceae</taxon>
        <taxon>BOP clade</taxon>
        <taxon>Pooideae</taxon>
        <taxon>Triticodae</taxon>
        <taxon>Triticeae</taxon>
        <taxon>Hordeinae</taxon>
        <taxon>Hordeum</taxon>
    </lineage>
</organism>
<comment type="function">
    <text evidence="1">Participates in electron transfer between P700 and the cytochrome b6-f complex in photosystem I.</text>
</comment>
<comment type="cofactor">
    <cofactor evidence="1">
        <name>Cu(2+)</name>
        <dbReference type="ChEBI" id="CHEBI:29036"/>
    </cofactor>
</comment>
<comment type="subcellular location">
    <subcellularLocation>
        <location evidence="1">Plastid</location>
        <location evidence="1">Chloroplast thylakoid membrane</location>
        <topology evidence="1">Peripheral membrane protein</topology>
        <orientation evidence="1">Lumenal side</orientation>
    </subcellularLocation>
    <text>Loosely bound to the inner thylakoid membrane surface in chloroplasts (By similarity).</text>
</comment>
<comment type="similarity">
    <text evidence="2">Belongs to the plastocyanin family.</text>
</comment>
<dbReference type="EMBL" id="Y00704">
    <property type="protein sequence ID" value="CAA68696.1"/>
    <property type="molecule type" value="mRNA"/>
</dbReference>
<dbReference type="EMBL" id="Z28347">
    <property type="protein sequence ID" value="CAA82201.1"/>
    <property type="molecule type" value="Genomic_DNA"/>
</dbReference>
<dbReference type="PIR" id="S38255">
    <property type="entry name" value="S38255"/>
</dbReference>
<dbReference type="SMR" id="P08248"/>
<dbReference type="ExpressionAtlas" id="P08248">
    <property type="expression patterns" value="baseline and differential"/>
</dbReference>
<dbReference type="GO" id="GO:0009543">
    <property type="term" value="C:chloroplast thylakoid lumen"/>
    <property type="evidence" value="ECO:0007669"/>
    <property type="project" value="TreeGrafter"/>
</dbReference>
<dbReference type="GO" id="GO:0009535">
    <property type="term" value="C:chloroplast thylakoid membrane"/>
    <property type="evidence" value="ECO:0007669"/>
    <property type="project" value="UniProtKB-SubCell"/>
</dbReference>
<dbReference type="GO" id="GO:0005507">
    <property type="term" value="F:copper ion binding"/>
    <property type="evidence" value="ECO:0007669"/>
    <property type="project" value="InterPro"/>
</dbReference>
<dbReference type="GO" id="GO:0046028">
    <property type="term" value="F:electron transporter, transferring electrons from cytochrome b6/f complex of photosystem II activity"/>
    <property type="evidence" value="ECO:0007669"/>
    <property type="project" value="TreeGrafter"/>
</dbReference>
<dbReference type="CDD" id="cd04219">
    <property type="entry name" value="Plastocyanin"/>
    <property type="match status" value="1"/>
</dbReference>
<dbReference type="Gene3D" id="2.60.40.420">
    <property type="entry name" value="Cupredoxins - blue copper proteins"/>
    <property type="match status" value="1"/>
</dbReference>
<dbReference type="InterPro" id="IPR000923">
    <property type="entry name" value="BlueCu_1"/>
</dbReference>
<dbReference type="InterPro" id="IPR028871">
    <property type="entry name" value="BlueCu_1_BS"/>
</dbReference>
<dbReference type="InterPro" id="IPR001235">
    <property type="entry name" value="Copper_blue_Plastocyanin"/>
</dbReference>
<dbReference type="InterPro" id="IPR008972">
    <property type="entry name" value="Cupredoxin"/>
</dbReference>
<dbReference type="InterPro" id="IPR002387">
    <property type="entry name" value="Plastocyanin"/>
</dbReference>
<dbReference type="NCBIfam" id="TIGR02656">
    <property type="entry name" value="cyanin_plasto"/>
    <property type="match status" value="1"/>
</dbReference>
<dbReference type="PANTHER" id="PTHR34192">
    <property type="entry name" value="PLASTOCYANIN MAJOR ISOFORM, CHLOROPLASTIC-RELATED"/>
    <property type="match status" value="1"/>
</dbReference>
<dbReference type="PANTHER" id="PTHR34192:SF10">
    <property type="entry name" value="PLASTOCYANIN MAJOR ISOFORM, CHLOROPLASTIC-RELATED"/>
    <property type="match status" value="1"/>
</dbReference>
<dbReference type="Pfam" id="PF00127">
    <property type="entry name" value="Copper-bind"/>
    <property type="match status" value="1"/>
</dbReference>
<dbReference type="PRINTS" id="PR00156">
    <property type="entry name" value="COPPERBLUE"/>
</dbReference>
<dbReference type="PRINTS" id="PR00157">
    <property type="entry name" value="PLASTOCYANIN"/>
</dbReference>
<dbReference type="SUPFAM" id="SSF49503">
    <property type="entry name" value="Cupredoxins"/>
    <property type="match status" value="1"/>
</dbReference>
<dbReference type="PROSITE" id="PS00196">
    <property type="entry name" value="COPPER_BLUE"/>
    <property type="match status" value="1"/>
</dbReference>
<gene>
    <name type="primary">PETE</name>
</gene>